<keyword id="KW-0238">DNA-binding</keyword>
<keyword id="KW-1185">Reference proteome</keyword>
<accession>P47337</accession>
<organism>
    <name type="scientific">Mycoplasma genitalium (strain ATCC 33530 / DSM 19775 / NCTC 10195 / G37)</name>
    <name type="common">Mycoplasmoides genitalium</name>
    <dbReference type="NCBI Taxonomy" id="243273"/>
    <lineage>
        <taxon>Bacteria</taxon>
        <taxon>Bacillati</taxon>
        <taxon>Mycoplasmatota</taxon>
        <taxon>Mycoplasmoidales</taxon>
        <taxon>Mycoplasmoidaceae</taxon>
        <taxon>Mycoplasmoides</taxon>
    </lineage>
</organism>
<gene>
    <name type="primary">ssb</name>
    <name type="ordered locus">MG091</name>
</gene>
<sequence>MNRVFLFGKLSFTPNRLQTKNGTLGATFSMECLDSSGFNNAKSFIRVTAWGKVASFIVAQNPGVMLFVEGRLTTYKITNSENKNTYALQVTADKIFHPDEKTTNEEPIKSTVVDSPFMNPKASVTEAEFEQAFPHQDETDFNNITPIFENDVQLEEESDD</sequence>
<reference key="1">
    <citation type="journal article" date="1995" name="Science">
        <title>The minimal gene complement of Mycoplasma genitalium.</title>
        <authorList>
            <person name="Fraser C.M."/>
            <person name="Gocayne J.D."/>
            <person name="White O."/>
            <person name="Adams M.D."/>
            <person name="Clayton R.A."/>
            <person name="Fleischmann R.D."/>
            <person name="Bult C.J."/>
            <person name="Kerlavage A.R."/>
            <person name="Sutton G.G."/>
            <person name="Kelley J.M."/>
            <person name="Fritchman J.L."/>
            <person name="Weidman J.F."/>
            <person name="Small K.V."/>
            <person name="Sandusky M."/>
            <person name="Fuhrmann J.L."/>
            <person name="Nguyen D.T."/>
            <person name="Utterback T.R."/>
            <person name="Saudek D.M."/>
            <person name="Phillips C.A."/>
            <person name="Merrick J.M."/>
            <person name="Tomb J.-F."/>
            <person name="Dougherty B.A."/>
            <person name="Bott K.F."/>
            <person name="Hu P.-C."/>
            <person name="Lucier T.S."/>
            <person name="Peterson S.N."/>
            <person name="Smith H.O."/>
            <person name="Hutchison C.A. III"/>
            <person name="Venter J.C."/>
        </authorList>
    </citation>
    <scope>NUCLEOTIDE SEQUENCE [LARGE SCALE GENOMIC DNA]</scope>
    <source>
        <strain>ATCC 33530 / DSM 19775 / NCTC 10195 / G37</strain>
    </source>
</reference>
<dbReference type="EMBL" id="L43967">
    <property type="protein sequence ID" value="AAC71309.1"/>
    <property type="molecule type" value="Genomic_DNA"/>
</dbReference>
<dbReference type="PIR" id="A64210">
    <property type="entry name" value="A64210"/>
</dbReference>
<dbReference type="RefSeq" id="WP_010869327.1">
    <property type="nucleotide sequence ID" value="NC_000908.2"/>
</dbReference>
<dbReference type="SMR" id="P47337"/>
<dbReference type="FunCoup" id="P47337">
    <property type="interactions" value="206"/>
</dbReference>
<dbReference type="STRING" id="243273.MG_091"/>
<dbReference type="GeneID" id="88282214"/>
<dbReference type="KEGG" id="mge:MG_091"/>
<dbReference type="eggNOG" id="COG0629">
    <property type="taxonomic scope" value="Bacteria"/>
</dbReference>
<dbReference type="HOGENOM" id="CLU_1650259_0_0_14"/>
<dbReference type="InParanoid" id="P47337"/>
<dbReference type="OrthoDB" id="9809878at2"/>
<dbReference type="BioCyc" id="MGEN243273:G1GJ2-103-MONOMER"/>
<dbReference type="Proteomes" id="UP000000807">
    <property type="component" value="Chromosome"/>
</dbReference>
<dbReference type="GO" id="GO:0009295">
    <property type="term" value="C:nucleoid"/>
    <property type="evidence" value="ECO:0000318"/>
    <property type="project" value="GO_Central"/>
</dbReference>
<dbReference type="GO" id="GO:0008047">
    <property type="term" value="F:enzyme activator activity"/>
    <property type="evidence" value="ECO:0000318"/>
    <property type="project" value="GO_Central"/>
</dbReference>
<dbReference type="GO" id="GO:0003697">
    <property type="term" value="F:single-stranded DNA binding"/>
    <property type="evidence" value="ECO:0000318"/>
    <property type="project" value="GO_Central"/>
</dbReference>
<dbReference type="GO" id="GO:0006260">
    <property type="term" value="P:DNA replication"/>
    <property type="evidence" value="ECO:0000318"/>
    <property type="project" value="GO_Central"/>
</dbReference>
<dbReference type="CDD" id="cd04496">
    <property type="entry name" value="SSB_OBF"/>
    <property type="match status" value="1"/>
</dbReference>
<dbReference type="Gene3D" id="2.40.50.140">
    <property type="entry name" value="Nucleic acid-binding proteins"/>
    <property type="match status" value="1"/>
</dbReference>
<dbReference type="InterPro" id="IPR012340">
    <property type="entry name" value="NA-bd_OB-fold"/>
</dbReference>
<dbReference type="InterPro" id="IPR000424">
    <property type="entry name" value="Primosome_PriB/ssb"/>
</dbReference>
<dbReference type="InterPro" id="IPR011344">
    <property type="entry name" value="ssDNA-bd"/>
</dbReference>
<dbReference type="Pfam" id="PF00436">
    <property type="entry name" value="SSB"/>
    <property type="match status" value="1"/>
</dbReference>
<dbReference type="PIRSF" id="PIRSF002070">
    <property type="entry name" value="SSB"/>
    <property type="match status" value="1"/>
</dbReference>
<dbReference type="SUPFAM" id="SSF50249">
    <property type="entry name" value="Nucleic acid-binding proteins"/>
    <property type="match status" value="1"/>
</dbReference>
<dbReference type="PROSITE" id="PS50935">
    <property type="entry name" value="SSB"/>
    <property type="match status" value="1"/>
</dbReference>
<evidence type="ECO:0000250" key="1"/>
<evidence type="ECO:0000255" key="2">
    <source>
        <dbReference type="PROSITE-ProRule" id="PRU00252"/>
    </source>
</evidence>
<name>SSB_MYCGE</name>
<proteinExistence type="inferred from homology"/>
<feature type="chain" id="PRO_0000096062" description="Single-stranded DNA-binding protein">
    <location>
        <begin position="1"/>
        <end position="160"/>
    </location>
</feature>
<feature type="domain" description="SSB" evidence="2">
    <location>
        <begin position="1"/>
        <end position="99"/>
    </location>
</feature>
<comment type="subunit">
    <text evidence="1">Homotetramer.</text>
</comment>
<protein>
    <recommendedName>
        <fullName>Single-stranded DNA-binding protein</fullName>
        <shortName>SSB</shortName>
    </recommendedName>
    <alternativeName>
        <fullName>Helix-destabilizing protein</fullName>
    </alternativeName>
</protein>